<reference key="1">
    <citation type="journal article" date="1993" name="Plant Mol. Biol.">
        <title>Characterization of the soybean early nodulin cDNA clone GmENOD55.</title>
        <authorList>
            <person name="de Blank C."/>
            <person name="Mylona P."/>
            <person name="Yang W.C."/>
            <person name="Katinakis P."/>
            <person name="Bisseling T."/>
            <person name="Franssen H."/>
        </authorList>
    </citation>
    <scope>NUCLEOTIDE SEQUENCE [MRNA]</scope>
    <source>
        <strain>cv. Williams</strain>
        <tissue>Root</tissue>
    </source>
</reference>
<organism>
    <name type="scientific">Glycine max</name>
    <name type="common">Soybean</name>
    <name type="synonym">Glycine hispida</name>
    <dbReference type="NCBI Taxonomy" id="3847"/>
    <lineage>
        <taxon>Eukaryota</taxon>
        <taxon>Viridiplantae</taxon>
        <taxon>Streptophyta</taxon>
        <taxon>Embryophyta</taxon>
        <taxon>Tracheophyta</taxon>
        <taxon>Spermatophyta</taxon>
        <taxon>Magnoliopsida</taxon>
        <taxon>eudicotyledons</taxon>
        <taxon>Gunneridae</taxon>
        <taxon>Pentapetalae</taxon>
        <taxon>rosids</taxon>
        <taxon>fabids</taxon>
        <taxon>Fabales</taxon>
        <taxon>Fabaceae</taxon>
        <taxon>Papilionoideae</taxon>
        <taxon>50 kb inversion clade</taxon>
        <taxon>NPAAA clade</taxon>
        <taxon>indigoferoid/millettioid clade</taxon>
        <taxon>Phaseoleae</taxon>
        <taxon>Glycine</taxon>
        <taxon>Glycine subgen. Soja</taxon>
    </lineage>
</organism>
<comment type="function">
    <text evidence="6">May act as a carbohydrate transporter.</text>
</comment>
<comment type="subcellular location">
    <subcellularLocation>
        <location evidence="6">Symbiosome</location>
        <location evidence="6">Peribacteroid membrane</location>
    </subcellularLocation>
</comment>
<comment type="developmental stage">
    <text>Expressed at early stages of nodule development. Maximal expression is seen in nodules from 14-day-old plants after which levels decrease.</text>
</comment>
<comment type="induction">
    <text>During nodulation in legume roots after Rhizobium infection, and after release of bacteria from the infection thread.</text>
</comment>
<comment type="similarity">
    <text evidence="6">Belongs to the early nodulin-like (ENODL) family.</text>
</comment>
<gene>
    <name evidence="5" type="primary">ENOD55-1</name>
</gene>
<dbReference type="EMBL" id="X69156">
    <property type="protein sequence ID" value="CAA48908.1"/>
    <property type="molecule type" value="mRNA"/>
</dbReference>
<dbReference type="PIR" id="S37353">
    <property type="entry name" value="S37353"/>
</dbReference>
<dbReference type="SMR" id="Q05544"/>
<dbReference type="STRING" id="3847.Q05544"/>
<dbReference type="GlyCosmos" id="Q05544">
    <property type="glycosylation" value="3 sites, No reported glycans"/>
</dbReference>
<dbReference type="PaxDb" id="3847-GLYMA02G36580.1"/>
<dbReference type="InParanoid" id="Q05544"/>
<dbReference type="Proteomes" id="UP000008827">
    <property type="component" value="Unplaced"/>
</dbReference>
<dbReference type="GO" id="GO:0043661">
    <property type="term" value="C:peribacteroid membrane"/>
    <property type="evidence" value="ECO:0007669"/>
    <property type="project" value="UniProtKB-SubCell"/>
</dbReference>
<dbReference type="GO" id="GO:0005886">
    <property type="term" value="C:plasma membrane"/>
    <property type="evidence" value="ECO:0000318"/>
    <property type="project" value="GO_Central"/>
</dbReference>
<dbReference type="GO" id="GO:0009055">
    <property type="term" value="F:electron transfer activity"/>
    <property type="evidence" value="ECO:0007669"/>
    <property type="project" value="InterPro"/>
</dbReference>
<dbReference type="GO" id="GO:0009877">
    <property type="term" value="P:nodulation"/>
    <property type="evidence" value="ECO:0007669"/>
    <property type="project" value="UniProtKB-KW"/>
</dbReference>
<dbReference type="Gene3D" id="2.60.40.420">
    <property type="entry name" value="Cupredoxins - blue copper proteins"/>
    <property type="match status" value="1"/>
</dbReference>
<dbReference type="InterPro" id="IPR008972">
    <property type="entry name" value="Cupredoxin"/>
</dbReference>
<dbReference type="InterPro" id="IPR039391">
    <property type="entry name" value="Phytocyanin-like"/>
</dbReference>
<dbReference type="InterPro" id="IPR003245">
    <property type="entry name" value="Phytocyanin_dom"/>
</dbReference>
<dbReference type="PANTHER" id="PTHR33021">
    <property type="entry name" value="BLUE COPPER PROTEIN"/>
    <property type="match status" value="1"/>
</dbReference>
<dbReference type="PANTHER" id="PTHR33021:SF519">
    <property type="entry name" value="EARLY NODULIN-LIKE PROTEIN 10"/>
    <property type="match status" value="1"/>
</dbReference>
<dbReference type="Pfam" id="PF02298">
    <property type="entry name" value="Cu_bind_like"/>
    <property type="match status" value="1"/>
</dbReference>
<dbReference type="SUPFAM" id="SSF49503">
    <property type="entry name" value="Cupredoxins"/>
    <property type="match status" value="1"/>
</dbReference>
<dbReference type="PROSITE" id="PS51485">
    <property type="entry name" value="PHYTOCYANIN"/>
    <property type="match status" value="1"/>
</dbReference>
<sequence>KYDERTESVHEVNETDYEQCNTVGKEHVLFNDGNTKVMLTKSGFRHFISGNQSHCQMGLKLMVVVMSNNTKKKLIHSPSPSSPSPSPSPSPSPSPSPSPSLSSPSPSPLPNNQGVTRSSGAEFIGVMMWLGVMMLLL</sequence>
<keyword id="KW-1015">Disulfide bond</keyword>
<keyword id="KW-0325">Glycoprotein</keyword>
<keyword id="KW-0472">Membrane</keyword>
<keyword id="KW-0535">Nitrogen fixation</keyword>
<keyword id="KW-0536">Nodulation</keyword>
<keyword id="KW-1185">Reference proteome</keyword>
<keyword id="KW-0732">Signal</keyword>
<evidence type="ECO:0000255" key="1"/>
<evidence type="ECO:0000255" key="2">
    <source>
        <dbReference type="PROSITE-ProRule" id="PRU00498"/>
    </source>
</evidence>
<evidence type="ECO:0000255" key="3">
    <source>
        <dbReference type="PROSITE-ProRule" id="PRU00818"/>
    </source>
</evidence>
<evidence type="ECO:0000256" key="4">
    <source>
        <dbReference type="SAM" id="MobiDB-lite"/>
    </source>
</evidence>
<evidence type="ECO:0000303" key="5">
    <source>
    </source>
</evidence>
<evidence type="ECO:0000305" key="6"/>
<name>NO551_SOYBN</name>
<proteinExistence type="evidence at transcript level"/>
<feature type="signal peptide" evidence="1">
    <location>
        <begin position="1" status="less than"/>
        <end status="unknown"/>
    </location>
</feature>
<feature type="chain" id="PRO_0000085559" description="Early nodulin-55-1">
    <location>
        <begin status="unknown"/>
        <end position="137"/>
    </location>
</feature>
<feature type="domain" description="Phytocyanin" evidence="3">
    <location>
        <begin position="1"/>
        <end position="67"/>
    </location>
</feature>
<feature type="region of interest" description="Disordered" evidence="4">
    <location>
        <begin position="70"/>
        <end position="115"/>
    </location>
</feature>
<feature type="compositionally biased region" description="Pro residues" evidence="4">
    <location>
        <begin position="80"/>
        <end position="98"/>
    </location>
</feature>
<feature type="glycosylation site" description="N-linked (GlcNAc...) asparagine" evidence="2">
    <location>
        <position position="13"/>
    </location>
</feature>
<feature type="glycosylation site" description="N-linked (GlcNAc...) asparagine" evidence="2">
    <location>
        <position position="51"/>
    </location>
</feature>
<feature type="glycosylation site" description="N-linked (GlcNAc...) asparagine" evidence="2">
    <location>
        <position position="68"/>
    </location>
</feature>
<feature type="disulfide bond" evidence="3">
    <location>
        <begin position="20"/>
        <end position="55"/>
    </location>
</feature>
<feature type="non-terminal residue">
    <location>
        <position position="1"/>
    </location>
</feature>
<protein>
    <recommendedName>
        <fullName evidence="5">Early nodulin-55-1</fullName>
        <shortName evidence="5">N-55-1</shortName>
    </recommendedName>
</protein>
<accession>Q05544</accession>